<protein>
    <recommendedName>
        <fullName>Uncharacterized protein RP090</fullName>
    </recommendedName>
</protein>
<keyword id="KW-1003">Cell membrane</keyword>
<keyword id="KW-0472">Membrane</keyword>
<keyword id="KW-1185">Reference proteome</keyword>
<keyword id="KW-0812">Transmembrane</keyword>
<keyword id="KW-1133">Transmembrane helix</keyword>
<evidence type="ECO:0000255" key="1"/>
<evidence type="ECO:0000305" key="2"/>
<proteinExistence type="predicted"/>
<feature type="chain" id="PRO_0000101314" description="Uncharacterized protein RP090">
    <location>
        <begin position="1"/>
        <end position="218"/>
    </location>
</feature>
<feature type="transmembrane region" description="Helical" evidence="1">
    <location>
        <begin position="14"/>
        <end position="34"/>
    </location>
</feature>
<feature type="transmembrane region" description="Helical" evidence="1">
    <location>
        <begin position="175"/>
        <end position="195"/>
    </location>
</feature>
<sequence length="218" mass="24716">MRKALKKFLKNSKCLLSIITILLYWYLRFVYFTSRQKFIFYDNRNKEKFLNEQGVIFAFWHNMLALSPAMFTGHRNVYALISPHLDGKILNALVGKFGCQVIVGSTNKNSIVALRNIIGKLSQGANIIVTPDGPKGPVYKVNSGITEIAYRYNKKLIPIVSSTSRCFRLKSWDKLIIPIPFGTIKIIVGSPLALVADKVKNHLNLEKQLKSLTESLKK</sequence>
<name>Y090_RICPR</name>
<dbReference type="EMBL" id="AJ235270">
    <property type="protein sequence ID" value="CAA14560.1"/>
    <property type="molecule type" value="Genomic_DNA"/>
</dbReference>
<dbReference type="PIR" id="A71718">
    <property type="entry name" value="A71718"/>
</dbReference>
<dbReference type="RefSeq" id="NP_220483.1">
    <property type="nucleotide sequence ID" value="NC_000963.1"/>
</dbReference>
<dbReference type="RefSeq" id="WP_004596512.1">
    <property type="nucleotide sequence ID" value="NC_000963.1"/>
</dbReference>
<dbReference type="STRING" id="272947.gene:17555173"/>
<dbReference type="EnsemblBacteria" id="CAA14560">
    <property type="protein sequence ID" value="CAA14560"/>
    <property type="gene ID" value="CAA14560"/>
</dbReference>
<dbReference type="KEGG" id="rpr:RP090"/>
<dbReference type="PATRIC" id="fig|272947.5.peg.90"/>
<dbReference type="eggNOG" id="COG2121">
    <property type="taxonomic scope" value="Bacteria"/>
</dbReference>
<dbReference type="HOGENOM" id="CLU_086327_0_0_5"/>
<dbReference type="OrthoDB" id="9810508at2"/>
<dbReference type="Proteomes" id="UP000002480">
    <property type="component" value="Chromosome"/>
</dbReference>
<dbReference type="GO" id="GO:0005886">
    <property type="term" value="C:plasma membrane"/>
    <property type="evidence" value="ECO:0007669"/>
    <property type="project" value="UniProtKB-SubCell"/>
</dbReference>
<dbReference type="CDD" id="cd07983">
    <property type="entry name" value="LPLAT_DUF374-like"/>
    <property type="match status" value="1"/>
</dbReference>
<dbReference type="InterPro" id="IPR007172">
    <property type="entry name" value="DUF374"/>
</dbReference>
<dbReference type="Pfam" id="PF04028">
    <property type="entry name" value="DUF374"/>
    <property type="match status" value="1"/>
</dbReference>
<comment type="subcellular location">
    <subcellularLocation>
        <location evidence="2">Cell membrane</location>
        <topology evidence="2">Multi-pass membrane protein</topology>
    </subcellularLocation>
</comment>
<comment type="similarity">
    <text evidence="2">To H.pylori HP0270.</text>
</comment>
<organism>
    <name type="scientific">Rickettsia prowazekii (strain Madrid E)</name>
    <dbReference type="NCBI Taxonomy" id="272947"/>
    <lineage>
        <taxon>Bacteria</taxon>
        <taxon>Pseudomonadati</taxon>
        <taxon>Pseudomonadota</taxon>
        <taxon>Alphaproteobacteria</taxon>
        <taxon>Rickettsiales</taxon>
        <taxon>Rickettsiaceae</taxon>
        <taxon>Rickettsieae</taxon>
        <taxon>Rickettsia</taxon>
        <taxon>typhus group</taxon>
    </lineage>
</organism>
<gene>
    <name type="ordered locus">RP090</name>
</gene>
<accession>Q9ZE57</accession>
<reference key="1">
    <citation type="journal article" date="1998" name="Nature">
        <title>The genome sequence of Rickettsia prowazekii and the origin of mitochondria.</title>
        <authorList>
            <person name="Andersson S.G.E."/>
            <person name="Zomorodipour A."/>
            <person name="Andersson J.O."/>
            <person name="Sicheritz-Ponten T."/>
            <person name="Alsmark U.C.M."/>
            <person name="Podowski R.M."/>
            <person name="Naeslund A.K."/>
            <person name="Eriksson A.-S."/>
            <person name="Winkler H.H."/>
            <person name="Kurland C.G."/>
        </authorList>
    </citation>
    <scope>NUCLEOTIDE SEQUENCE [LARGE SCALE GENOMIC DNA]</scope>
    <source>
        <strain>Madrid E</strain>
    </source>
</reference>